<dbReference type="EMBL" id="CP000325">
    <property type="protein sequence ID" value="ABL05453.1"/>
    <property type="molecule type" value="Genomic_DNA"/>
</dbReference>
<dbReference type="RefSeq" id="WP_011741062.1">
    <property type="nucleotide sequence ID" value="NC_008611.1"/>
</dbReference>
<dbReference type="SMR" id="A0PSY4"/>
<dbReference type="KEGG" id="mul:MUL_3246"/>
<dbReference type="eggNOG" id="COG0217">
    <property type="taxonomic scope" value="Bacteria"/>
</dbReference>
<dbReference type="HOGENOM" id="CLU_062974_2_2_11"/>
<dbReference type="Proteomes" id="UP000000765">
    <property type="component" value="Chromosome"/>
</dbReference>
<dbReference type="GO" id="GO:0005829">
    <property type="term" value="C:cytosol"/>
    <property type="evidence" value="ECO:0007669"/>
    <property type="project" value="TreeGrafter"/>
</dbReference>
<dbReference type="GO" id="GO:0003677">
    <property type="term" value="F:DNA binding"/>
    <property type="evidence" value="ECO:0007669"/>
    <property type="project" value="UniProtKB-UniRule"/>
</dbReference>
<dbReference type="GO" id="GO:0006355">
    <property type="term" value="P:regulation of DNA-templated transcription"/>
    <property type="evidence" value="ECO:0007669"/>
    <property type="project" value="UniProtKB-UniRule"/>
</dbReference>
<dbReference type="FunFam" id="1.10.10.200:FF:000002">
    <property type="entry name" value="Probable transcriptional regulatory protein CLM62_37755"/>
    <property type="match status" value="1"/>
</dbReference>
<dbReference type="FunFam" id="3.30.70.980:FF:000006">
    <property type="entry name" value="Probable transcriptional regulatory protein J113_18170"/>
    <property type="match status" value="1"/>
</dbReference>
<dbReference type="Gene3D" id="1.10.10.200">
    <property type="match status" value="1"/>
</dbReference>
<dbReference type="Gene3D" id="3.30.70.980">
    <property type="match status" value="2"/>
</dbReference>
<dbReference type="HAMAP" id="MF_00693">
    <property type="entry name" value="Transcrip_reg_TACO1"/>
    <property type="match status" value="1"/>
</dbReference>
<dbReference type="InterPro" id="IPR017856">
    <property type="entry name" value="Integrase-like_N"/>
</dbReference>
<dbReference type="InterPro" id="IPR048300">
    <property type="entry name" value="TACO1_YebC-like_2nd/3rd_dom"/>
</dbReference>
<dbReference type="InterPro" id="IPR049083">
    <property type="entry name" value="TACO1_YebC_N"/>
</dbReference>
<dbReference type="InterPro" id="IPR002876">
    <property type="entry name" value="Transcrip_reg_TACO1-like"/>
</dbReference>
<dbReference type="InterPro" id="IPR026564">
    <property type="entry name" value="Transcrip_reg_TACO1-like_dom3"/>
</dbReference>
<dbReference type="InterPro" id="IPR029072">
    <property type="entry name" value="YebC-like"/>
</dbReference>
<dbReference type="NCBIfam" id="NF001030">
    <property type="entry name" value="PRK00110.1"/>
    <property type="match status" value="1"/>
</dbReference>
<dbReference type="NCBIfam" id="NF009044">
    <property type="entry name" value="PRK12378.1"/>
    <property type="match status" value="1"/>
</dbReference>
<dbReference type="NCBIfam" id="TIGR01033">
    <property type="entry name" value="YebC/PmpR family DNA-binding transcriptional regulator"/>
    <property type="match status" value="1"/>
</dbReference>
<dbReference type="PANTHER" id="PTHR12532:SF6">
    <property type="entry name" value="TRANSCRIPTIONAL REGULATORY PROTEIN YEBC-RELATED"/>
    <property type="match status" value="1"/>
</dbReference>
<dbReference type="PANTHER" id="PTHR12532">
    <property type="entry name" value="TRANSLATIONAL ACTIVATOR OF CYTOCHROME C OXIDASE 1"/>
    <property type="match status" value="1"/>
</dbReference>
<dbReference type="Pfam" id="PF20772">
    <property type="entry name" value="TACO1_YebC_N"/>
    <property type="match status" value="1"/>
</dbReference>
<dbReference type="Pfam" id="PF01709">
    <property type="entry name" value="Transcrip_reg"/>
    <property type="match status" value="1"/>
</dbReference>
<dbReference type="SUPFAM" id="SSF75625">
    <property type="entry name" value="YebC-like"/>
    <property type="match status" value="1"/>
</dbReference>
<evidence type="ECO:0000255" key="1">
    <source>
        <dbReference type="HAMAP-Rule" id="MF_00693"/>
    </source>
</evidence>
<feature type="chain" id="PRO_1000045343" description="Probable transcriptional regulatory protein MUL_3246">
    <location>
        <begin position="1"/>
        <end position="251"/>
    </location>
</feature>
<reference key="1">
    <citation type="journal article" date="2007" name="Genome Res.">
        <title>Reductive evolution and niche adaptation inferred from the genome of Mycobacterium ulcerans, the causative agent of Buruli ulcer.</title>
        <authorList>
            <person name="Stinear T.P."/>
            <person name="Seemann T."/>
            <person name="Pidot S."/>
            <person name="Frigui W."/>
            <person name="Reysset G."/>
            <person name="Garnier T."/>
            <person name="Meurice G."/>
            <person name="Simon D."/>
            <person name="Bouchier C."/>
            <person name="Ma L."/>
            <person name="Tichit M."/>
            <person name="Porter J.L."/>
            <person name="Ryan J."/>
            <person name="Johnson P.D.R."/>
            <person name="Davies J.K."/>
            <person name="Jenkin G.A."/>
            <person name="Small P.L.C."/>
            <person name="Jones L.M."/>
            <person name="Tekaia F."/>
            <person name="Laval F."/>
            <person name="Daffe M."/>
            <person name="Parkhill J."/>
            <person name="Cole S.T."/>
        </authorList>
    </citation>
    <scope>NUCLEOTIDE SEQUENCE [LARGE SCALE GENOMIC DNA]</scope>
    <source>
        <strain>Agy99</strain>
    </source>
</reference>
<organism>
    <name type="scientific">Mycobacterium ulcerans (strain Agy99)</name>
    <dbReference type="NCBI Taxonomy" id="362242"/>
    <lineage>
        <taxon>Bacteria</taxon>
        <taxon>Bacillati</taxon>
        <taxon>Actinomycetota</taxon>
        <taxon>Actinomycetes</taxon>
        <taxon>Mycobacteriales</taxon>
        <taxon>Mycobacteriaceae</taxon>
        <taxon>Mycobacterium</taxon>
        <taxon>Mycobacterium ulcerans group</taxon>
    </lineage>
</organism>
<accession>A0PSY4</accession>
<gene>
    <name type="ordered locus">MUL_3246</name>
</gene>
<proteinExistence type="inferred from homology"/>
<keyword id="KW-0963">Cytoplasm</keyword>
<keyword id="KW-0238">DNA-binding</keyword>
<keyword id="KW-0804">Transcription</keyword>
<keyword id="KW-0805">Transcription regulation</keyword>
<sequence length="251" mass="26815">MSGHSKWATTKHKKAVIDARRGKMFARLIKNIEVAARVGGGDPAGNPTLYDAIQKAKKSSVPNENIERARKRGAGEEAGGADWQTIMYEGYAPNGVAVLIECLTDNRNRAASEVRVAMTRNGGAMADPGSVSYLFSRKGVVTLEKNGLTEDDVLAAVLEAGAEDVNDLGDSFEVISEPGELVAVRSALQDAGIDYESAEAGFQSSVTVPVDVDGARKVFKLVDALEESDDVQNVWTNVDVSDEVLAELDEE</sequence>
<comment type="subcellular location">
    <subcellularLocation>
        <location evidence="1">Cytoplasm</location>
    </subcellularLocation>
</comment>
<comment type="similarity">
    <text evidence="1">Belongs to the TACO1 family.</text>
</comment>
<protein>
    <recommendedName>
        <fullName evidence="1">Probable transcriptional regulatory protein MUL_3246</fullName>
    </recommendedName>
</protein>
<name>Y3246_MYCUA</name>